<protein>
    <recommendedName>
        <fullName>Pyrophosphate-energized proton pump</fullName>
        <ecNumber>7.1.3.1</ecNumber>
    </recommendedName>
    <alternativeName>
        <fullName>Membrane-bound proton-translocating pyrophosphatase</fullName>
    </alternativeName>
    <alternativeName>
        <fullName>Pyrophosphate-energized inorganic pyrophosphatase</fullName>
        <shortName>H(+)-PPase</shortName>
    </alternativeName>
</protein>
<accession>Q8VRZ1</accession>
<sequence length="141" mass="14012">NGSIMGALYKGLIATGLLSIVGLGVANTLTVGWGEIGTVAGKSITGTNLFVCGLIGLIVTGLIVVITEYYTGTNKRPVNSXAQASVTGHGTNVIQGLAVSLESTALPAIVIVGGIIXTYQLAGLFGTAIAVTAMLGIAGMI</sequence>
<name>HPPA_ANAMA</name>
<dbReference type="EC" id="7.1.3.1"/>
<dbReference type="EMBL" id="AF417515">
    <property type="protein sequence ID" value="AAL69331.1"/>
    <property type="molecule type" value="Genomic_DNA"/>
</dbReference>
<dbReference type="GO" id="GO:0005886">
    <property type="term" value="C:plasma membrane"/>
    <property type="evidence" value="ECO:0007669"/>
    <property type="project" value="UniProtKB-SubCell"/>
</dbReference>
<dbReference type="GO" id="GO:0009678">
    <property type="term" value="F:diphosphate hydrolysis-driven proton transmembrane transporter activity"/>
    <property type="evidence" value="ECO:0007669"/>
    <property type="project" value="UniProtKB-EC"/>
</dbReference>
<dbReference type="GO" id="GO:0004427">
    <property type="term" value="F:inorganic diphosphate phosphatase activity"/>
    <property type="evidence" value="ECO:0007669"/>
    <property type="project" value="InterPro"/>
</dbReference>
<dbReference type="InterPro" id="IPR004131">
    <property type="entry name" value="PPase-energised_H-pump"/>
</dbReference>
<dbReference type="PANTHER" id="PTHR31998">
    <property type="entry name" value="K(+)-INSENSITIVE PYROPHOSPHATE-ENERGIZED PROTON PUMP"/>
    <property type="match status" value="1"/>
</dbReference>
<dbReference type="Pfam" id="PF03030">
    <property type="entry name" value="H_PPase"/>
    <property type="match status" value="1"/>
</dbReference>
<reference key="1">
    <citation type="submission" date="2001-09" db="EMBL/GenBank/DDBJ databases">
        <title>High prevalence of the H+ proton-pumping inorganic pyrophosphatase gene in alpha proteobacteria and evidence of lateral transfer in its phylogeny.</title>
        <authorList>
            <person name="Jumas-Bilak E."/>
            <person name="Michaux-Charachon S."/>
            <person name="Teyssier C."/>
        </authorList>
    </citation>
    <scope>NUCLEOTIDE SEQUENCE [GENOMIC DNA]</scope>
</reference>
<feature type="chain" id="PRO_0000217009" description="Pyrophosphate-energized proton pump">
    <location>
        <begin position="1" status="less than"/>
        <end position="141" status="greater than"/>
    </location>
</feature>
<feature type="transmembrane region" description="Helical" evidence="2">
    <location>
        <begin position="11"/>
        <end position="31"/>
    </location>
</feature>
<feature type="transmembrane region" description="Helical" evidence="2">
    <location>
        <begin position="46"/>
        <end position="66"/>
    </location>
</feature>
<feature type="transmembrane region" description="Helical" evidence="2">
    <location>
        <begin position="121"/>
        <end position="141"/>
    </location>
</feature>
<feature type="non-terminal residue">
    <location>
        <position position="1"/>
    </location>
</feature>
<feature type="non-terminal residue">
    <location>
        <position position="141"/>
    </location>
</feature>
<comment type="function">
    <text evidence="1">Proton pump that utilizes the energy of pyrophosphate hydrolysis as the driving force for proton movement across the membrane. Generates a proton motive force (By similarity).</text>
</comment>
<comment type="catalytic activity">
    <reaction>
        <text>diphosphate + H2O + H(+)(in) = 2 phosphate + 2 H(+)(out)</text>
        <dbReference type="Rhea" id="RHEA:13973"/>
        <dbReference type="ChEBI" id="CHEBI:15377"/>
        <dbReference type="ChEBI" id="CHEBI:15378"/>
        <dbReference type="ChEBI" id="CHEBI:33019"/>
        <dbReference type="ChEBI" id="CHEBI:43474"/>
        <dbReference type="EC" id="7.1.3.1"/>
    </reaction>
</comment>
<comment type="cofactor">
    <cofactor evidence="1">
        <name>Mg(2+)</name>
        <dbReference type="ChEBI" id="CHEBI:18420"/>
    </cofactor>
</comment>
<comment type="subunit">
    <text evidence="1">Homodimer.</text>
</comment>
<comment type="subcellular location">
    <subcellularLocation>
        <location evidence="1">Cell inner membrane</location>
        <topology evidence="1">Multi-pass membrane protein</topology>
    </subcellularLocation>
</comment>
<comment type="similarity">
    <text evidence="3">Belongs to the H(+)-translocating pyrophosphatase (TC 3.A.10) family.</text>
</comment>
<gene>
    <name type="primary">hppA</name>
</gene>
<evidence type="ECO:0000250" key="1"/>
<evidence type="ECO:0000255" key="2"/>
<evidence type="ECO:0000305" key="3"/>
<organism>
    <name type="scientific">Anaplasma marginale</name>
    <dbReference type="NCBI Taxonomy" id="770"/>
    <lineage>
        <taxon>Bacteria</taxon>
        <taxon>Pseudomonadati</taxon>
        <taxon>Pseudomonadota</taxon>
        <taxon>Alphaproteobacteria</taxon>
        <taxon>Rickettsiales</taxon>
        <taxon>Anaplasmataceae</taxon>
        <taxon>Anaplasma</taxon>
    </lineage>
</organism>
<proteinExistence type="inferred from homology"/>
<keyword id="KW-0997">Cell inner membrane</keyword>
<keyword id="KW-1003">Cell membrane</keyword>
<keyword id="KW-0375">Hydrogen ion transport</keyword>
<keyword id="KW-0406">Ion transport</keyword>
<keyword id="KW-0460">Magnesium</keyword>
<keyword id="KW-0472">Membrane</keyword>
<keyword id="KW-1278">Translocase</keyword>
<keyword id="KW-0812">Transmembrane</keyword>
<keyword id="KW-1133">Transmembrane helix</keyword>
<keyword id="KW-0813">Transport</keyword>